<accession>Q2HR82</accession>
<organism>
    <name type="scientific">Human herpesvirus 8 type P (isolate GK18)</name>
    <name type="common">HHV-8</name>
    <name type="synonym">Kaposi's sarcoma-associated herpesvirus</name>
    <dbReference type="NCBI Taxonomy" id="868565"/>
    <lineage>
        <taxon>Viruses</taxon>
        <taxon>Duplodnaviria</taxon>
        <taxon>Heunggongvirae</taxon>
        <taxon>Peploviricota</taxon>
        <taxon>Herviviricetes</taxon>
        <taxon>Herpesvirales</taxon>
        <taxon>Orthoherpesviridae</taxon>
        <taxon>Gammaherpesvirinae</taxon>
        <taxon>Rhadinovirus</taxon>
        <taxon>Rhadinovirus humangamma8</taxon>
        <taxon>Human herpesvirus 8</taxon>
    </lineage>
</organism>
<protein>
    <recommendedName>
        <fullName evidence="10">E3 SUMO-protein ligase K-bZIP</fullName>
        <ecNumber evidence="8">2.3.2.-</ecNumber>
    </recommendedName>
    <alternativeName>
        <fullName evidence="11">E3 SUMO-protein transferase K-bZIP</fullName>
    </alternativeName>
</protein>
<gene>
    <name type="primary">K8</name>
</gene>
<keyword id="KW-1078">G1/S host cell cycle checkpoint dysregulation by virus</keyword>
<keyword id="KW-0945">Host-virus interaction</keyword>
<keyword id="KW-1121">Modulation of host cell cycle by virus</keyword>
<keyword id="KW-1185">Reference proteome</keyword>
<keyword id="KW-0808">Transferase</keyword>
<keyword id="KW-0832">Ubl conjugation</keyword>
<keyword id="KW-0833">Ubl conjugation pathway</keyword>
<dbReference type="EC" id="2.3.2.-" evidence="8"/>
<dbReference type="EMBL" id="AF148805">
    <property type="protein sequence ID" value="ABD28901.1"/>
    <property type="molecule type" value="Genomic_DNA"/>
</dbReference>
<dbReference type="RefSeq" id="YP_001129403.1">
    <property type="nucleotide sequence ID" value="NC_009333.1"/>
</dbReference>
<dbReference type="SMR" id="Q2HR82"/>
<dbReference type="BioGRID" id="1776965">
    <property type="interactions" value="21"/>
</dbReference>
<dbReference type="IntAct" id="Q2HR82">
    <property type="interactions" value="6"/>
</dbReference>
<dbReference type="GeneID" id="4961462"/>
<dbReference type="KEGG" id="vg:4961462"/>
<dbReference type="UniPathway" id="UPA00886"/>
<dbReference type="Proteomes" id="UP000000942">
    <property type="component" value="Segment"/>
</dbReference>
<dbReference type="GO" id="GO:0016740">
    <property type="term" value="F:transferase activity"/>
    <property type="evidence" value="ECO:0007669"/>
    <property type="project" value="UniProtKB-KW"/>
</dbReference>
<dbReference type="GO" id="GO:0039686">
    <property type="term" value="P:bidirectional double-stranded viral DNA replication"/>
    <property type="evidence" value="ECO:0000314"/>
    <property type="project" value="UniProtKB"/>
</dbReference>
<dbReference type="GO" id="GO:0016925">
    <property type="term" value="P:protein sumoylation"/>
    <property type="evidence" value="ECO:0007669"/>
    <property type="project" value="UniProtKB-UniPathway"/>
</dbReference>
<dbReference type="GO" id="GO:0039645">
    <property type="term" value="P:symbiont-mediated perturbation of host cell cycle G1/S transition checkpoint"/>
    <property type="evidence" value="ECO:0007669"/>
    <property type="project" value="UniProtKB-KW"/>
</dbReference>
<dbReference type="InterPro" id="IPR010805">
    <property type="entry name" value="KSHV_K8"/>
</dbReference>
<dbReference type="Pfam" id="PF07188">
    <property type="entry name" value="KSHV_K8"/>
    <property type="match status" value="1"/>
</dbReference>
<name>KBZIP_HHV8P</name>
<organismHost>
    <name type="scientific">Homo sapiens</name>
    <name type="common">Human</name>
    <dbReference type="NCBI Taxonomy" id="9606"/>
</organismHost>
<reference key="1">
    <citation type="journal article" date="1999" name="J. Virol.">
        <title>Identification of a spliced gene from Kaposi's sarcoma-associated herpesvirus encoding a protein with similarities to latent membrane proteins 1 and 2A of Epstein-Barr virus.</title>
        <authorList>
            <person name="Glenn M."/>
            <person name="Rainbow L."/>
            <person name="Aurade F."/>
            <person name="Davison A."/>
            <person name="Schulz T.F."/>
        </authorList>
    </citation>
    <scope>NUCLEOTIDE SEQUENCE [LARGE SCALE GENOMIC DNA]</scope>
</reference>
<reference key="2">
    <citation type="journal article" date="2006" name="J. Gen. Virol.">
        <title>Kaposi's sarcoma-associated herpesvirus immune modulation: an overview.</title>
        <authorList>
            <person name="Rezaee S.A.R."/>
            <person name="Cunningham C."/>
            <person name="Davison A.J."/>
            <person name="Blackbourn D.J."/>
        </authorList>
    </citation>
    <scope>NUCLEOTIDE SEQUENCE [LARGE SCALE GENOMIC DNA]</scope>
</reference>
<reference key="3">
    <citation type="journal article" date="2002" name="Proc. Natl. Acad. Sci. U.S.A.">
        <title>Lytic replication-associated protein (RAP) encoded by Kaposi sarcoma-associated herpesvirus causes p21CIP-1-mediated G1 cell cycle arrest through CCAAT/enhancer-binding protein-alpha.</title>
        <authorList>
            <person name="Wu F.Y."/>
            <person name="Tang Q.Q."/>
            <person name="Chen H."/>
            <person name="ApRhys C."/>
            <person name="Farrell C."/>
            <person name="Chen J."/>
            <person name="Fujimuro M."/>
            <person name="Lane M.D."/>
            <person name="Hayward G.S."/>
        </authorList>
    </citation>
    <scope>FUNCTION IN CELL CYCLE ARREST</scope>
</reference>
<reference key="4">
    <citation type="journal article" date="2007" name="J. Virol.">
        <title>Binding of Kaposi's sarcoma-associated herpesvirus K-bZIP to interferon-responsive factor 3 elements modulates antiviral gene expression.</title>
        <authorList>
            <person name="Lefort S."/>
            <person name="Soucy-Faulkner A."/>
            <person name="Grandvaux N."/>
            <person name="Flamand L."/>
        </authorList>
    </citation>
    <scope>FUNCTION</scope>
</reference>
<reference key="5">
    <citation type="journal article" date="2007" name="J. Virol.">
        <title>Kaposi's sarcoma-associated herpesvirus-encoded protein kinase and its interaction with K-bZIP.</title>
        <authorList>
            <person name="Izumiya Y."/>
            <person name="Izumiya C."/>
            <person name="Van Geelen A."/>
            <person name="Wang D.H."/>
            <person name="Lam K.S."/>
            <person name="Luciw P.A."/>
            <person name="Kung H.J."/>
        </authorList>
    </citation>
    <scope>FUNCTION</scope>
    <scope>INTERACTION WITH PROTEIN K8</scope>
</reference>
<reference key="6">
    <citation type="journal article" date="2010" name="J. Biol. Chem.">
        <title>Kaposi's sarcoma-associated herpesvirus (KSHV) encodes a SUMO E3 ligase that is SIM-dependent and SUMO-2/3-specific.</title>
        <authorList>
            <person name="Chang P.C."/>
            <person name="Izumiya Y."/>
            <person name="Wu C.Y."/>
            <person name="Fitzgerald L.D."/>
            <person name="Campbell M."/>
            <person name="Ellison T.J."/>
            <person name="Lam K.S."/>
            <person name="Luciw P.A."/>
            <person name="Kung H.J."/>
        </authorList>
    </citation>
    <scope>FUNCTION AS SUMO E3 LIGASE</scope>
</reference>
<reference key="7">
    <citation type="journal article" date="2012" name="J. Biol. Chem.">
        <title>Leucine zipper domain is required for Kaposi sarcoma-associated herpesvirus (KSHV) K-bZIP protein to interact with histone deacetylase and is important for KSHV replication.</title>
        <authorList>
            <person name="Martinez F.P."/>
            <person name="Tang Q."/>
        </authorList>
    </citation>
    <scope>INTERACTION WITH HOST HDAC1 AND HDAC2</scope>
</reference>
<reference key="8">
    <citation type="journal article" date="2013" name="J. Virol.">
        <title>Chromatin immunoprecipitation and microarray analysis suggest functional cooperation between Kaposi's Sarcoma-associated herpesvirus ORF57 and K-bZIP.</title>
        <authorList>
            <person name="Hunter O.V."/>
            <person name="Sei E."/>
            <person name="Richardson R.B."/>
            <person name="Conrad N.K."/>
        </authorList>
    </citation>
    <scope>INTERACTION WITH PROTEIN ORF57</scope>
</reference>
<reference key="9">
    <citation type="journal article" date="2015" name="PLoS Pathog.">
        <title>K-bZIP Mediated SUMO-2/3 Specific Modification on the KSHV Genome Negatively Regulates Lytic Gene Expression and Viral Reactivation.</title>
        <authorList>
            <person name="Yang W.S."/>
            <person name="Hsu H.W."/>
            <person name="Campbell M."/>
            <person name="Cheng C.Y."/>
            <person name="Chang P.C."/>
        </authorList>
    </citation>
    <scope>FUNCTION</scope>
    <scope>MUTAGENESIS OF LEU-75</scope>
    <scope>CATALYTIC ACTIVITY</scope>
</reference>
<reference key="10">
    <citation type="journal article" date="2017" name="PLoS Pathog.">
        <title>SUMO modification of a heterochromatin histone demethylase JMJD2A enables viral gene transactivation and viral replication.</title>
        <authorList>
            <person name="Yang W.S."/>
            <person name="Campbell M."/>
            <person name="Chang P.C."/>
        </authorList>
    </citation>
    <scope>FUNCTION</scope>
    <scope>CATALYTIC ACTIVITY</scope>
    <scope>MUTAGENESIS OF LEU-75</scope>
</reference>
<evidence type="ECO:0000256" key="1">
    <source>
        <dbReference type="SAM" id="MobiDB-lite"/>
    </source>
</evidence>
<evidence type="ECO:0000269" key="2">
    <source>
    </source>
</evidence>
<evidence type="ECO:0000269" key="3">
    <source>
    </source>
</evidence>
<evidence type="ECO:0000269" key="4">
    <source>
    </source>
</evidence>
<evidence type="ECO:0000269" key="5">
    <source>
    </source>
</evidence>
<evidence type="ECO:0000269" key="6">
    <source>
    </source>
</evidence>
<evidence type="ECO:0000269" key="7">
    <source>
    </source>
</evidence>
<evidence type="ECO:0000269" key="8">
    <source>
    </source>
</evidence>
<evidence type="ECO:0000269" key="9">
    <source>
    </source>
</evidence>
<evidence type="ECO:0000303" key="10">
    <source>
    </source>
</evidence>
<evidence type="ECO:0000305" key="11"/>
<sequence length="286" mass="31574">MPRMKDIPTKSSPGTDNSEKDEAVIEEDLSLNGQPFFTDNTDGGENEVSWTSSLLSTYVGCQPPAIPVCETVIDLTAPSQSGAPGDEHLPCSLNAETKFHIPDPSWTLSHTPPRGPHISQQLPTRRSKRRLHRKFEEERLCTKAKQGAGRPVPASVVKVGNITPHYGEELTRGDAVPAAPITPPYPRVQRPAQPTHVLFSPVFVSLKAEVCDQSHSPTRKQGRYGRVSSKAYTRQLQQALEEKDAQLCFLAARLEAHKEQIIFLRDMLMRMCQQPASPTDAPLPPC</sequence>
<proteinExistence type="evidence at protein level"/>
<feature type="chain" id="PRO_0000423846" description="E3 SUMO-protein ligase K-bZIP">
    <location>
        <begin position="1"/>
        <end position="286"/>
    </location>
</feature>
<feature type="region of interest" description="Disordered" evidence="1">
    <location>
        <begin position="1"/>
        <end position="22"/>
    </location>
</feature>
<feature type="region of interest" description="Disordered" evidence="1">
    <location>
        <begin position="106"/>
        <end position="130"/>
    </location>
</feature>
<feature type="mutagenesis site" description="Complete loss of SUMO E3 ligase activity." evidence="8">
    <original>L</original>
    <variation>A</variation>
    <location>
        <position position="75"/>
    </location>
</feature>
<comment type="function">
    <text evidence="2 3 4 5 8 9">SUMO E3 ligase that plays a role in viral gene regulation and is essential for viral reactivation (PubMed:17652396, PubMed:20034935). Disrupts host G1 cell cycle control thus allowing viral transcription and translation to proceed at the early stages of infection. Catalyzes its own SUMO modification as well as that of its interacting partners such as host TP53 and RB1. Regulates viral gene expression and reactivation and may mediate the SUMOylation of viral promoters in the low methylated 'Lys-9' histone H3 (H3K9me) region which results in a diminution of viral gene expression after reactivation (PubMed:26197391). SUMOylates also host histone lysine demethylase 4A/KDM4A, an essential step for complete enrichment of SUMO-2/3 on the viral genome during viral transactivation and reactivation (PubMed:28212444).</text>
</comment>
<comment type="pathway">
    <text>Protein modification; protein sumoylation.</text>
</comment>
<comment type="subunit">
    <text evidence="3 6 7">Interacts with host HDAC1 and HDAC2, these interactions suppress HDAC activities. Interacts with protein ORF57. Interacts with protein vPK (PubMed:17108053).</text>
</comment>
<comment type="interaction">
    <interactant intactId="EBI-9006943">
        <id>Q2HR82</id>
    </interactant>
    <interactant intactId="EBI-6884751">
        <id>Q2HR75</id>
        <label>ORF57</label>
    </interactant>
    <organismsDiffer>false</organismsDiffer>
    <experiments>5</experiments>
</comment>
<comment type="interaction">
    <interactant intactId="EBI-9006943">
        <id>Q2HR82</id>
    </interactant>
    <interactant intactId="EBI-301821">
        <id>Q92769</id>
        <label>HDAC2</label>
    </interactant>
    <organismsDiffer>true</organismsDiffer>
    <experiments>7</experiments>
</comment>
<comment type="PTM">
    <text>Sumoylated.</text>
</comment>